<evidence type="ECO:0000255" key="1">
    <source>
        <dbReference type="HAMAP-Rule" id="MF_01398"/>
    </source>
</evidence>
<feature type="chain" id="PRO_0000368447" description="ATP synthase subunit b">
    <location>
        <begin position="1"/>
        <end position="156"/>
    </location>
</feature>
<feature type="transmembrane region" description="Helical" evidence="1">
    <location>
        <begin position="7"/>
        <end position="27"/>
    </location>
</feature>
<keyword id="KW-0066">ATP synthesis</keyword>
<keyword id="KW-0997">Cell inner membrane</keyword>
<keyword id="KW-1003">Cell membrane</keyword>
<keyword id="KW-0138">CF(0)</keyword>
<keyword id="KW-0375">Hydrogen ion transport</keyword>
<keyword id="KW-0406">Ion transport</keyword>
<keyword id="KW-0472">Membrane</keyword>
<keyword id="KW-0812">Transmembrane</keyword>
<keyword id="KW-1133">Transmembrane helix</keyword>
<keyword id="KW-0813">Transport</keyword>
<gene>
    <name evidence="1" type="primary">atpF</name>
    <name type="ordered locus">RALTA_A3096</name>
</gene>
<reference key="1">
    <citation type="journal article" date="2008" name="Genome Res.">
        <title>Genome sequence of the beta-rhizobium Cupriavidus taiwanensis and comparative genomics of rhizobia.</title>
        <authorList>
            <person name="Amadou C."/>
            <person name="Pascal G."/>
            <person name="Mangenot S."/>
            <person name="Glew M."/>
            <person name="Bontemps C."/>
            <person name="Capela D."/>
            <person name="Carrere S."/>
            <person name="Cruveiller S."/>
            <person name="Dossat C."/>
            <person name="Lajus A."/>
            <person name="Marchetti M."/>
            <person name="Poinsot V."/>
            <person name="Rouy Z."/>
            <person name="Servin B."/>
            <person name="Saad M."/>
            <person name="Schenowitz C."/>
            <person name="Barbe V."/>
            <person name="Batut J."/>
            <person name="Medigue C."/>
            <person name="Masson-Boivin C."/>
        </authorList>
    </citation>
    <scope>NUCLEOTIDE SEQUENCE [LARGE SCALE GENOMIC DNA]</scope>
    <source>
        <strain>DSM 17343 / BCRC 17206 / CCUG 44338 / CIP 107171 / LMG 19424 / R1</strain>
    </source>
</reference>
<dbReference type="EMBL" id="CU633749">
    <property type="protein sequence ID" value="CAQ71016.1"/>
    <property type="molecule type" value="Genomic_DNA"/>
</dbReference>
<dbReference type="RefSeq" id="WP_012354282.1">
    <property type="nucleotide sequence ID" value="NC_010528.1"/>
</dbReference>
<dbReference type="SMR" id="B3R7L9"/>
<dbReference type="GeneID" id="29762598"/>
<dbReference type="KEGG" id="cti:RALTA_A3096"/>
<dbReference type="eggNOG" id="COG0711">
    <property type="taxonomic scope" value="Bacteria"/>
</dbReference>
<dbReference type="HOGENOM" id="CLU_079215_4_5_4"/>
<dbReference type="BioCyc" id="CTAI977880:RALTA_RS15140-MONOMER"/>
<dbReference type="Proteomes" id="UP000001692">
    <property type="component" value="Chromosome 1"/>
</dbReference>
<dbReference type="GO" id="GO:0005886">
    <property type="term" value="C:plasma membrane"/>
    <property type="evidence" value="ECO:0007669"/>
    <property type="project" value="UniProtKB-SubCell"/>
</dbReference>
<dbReference type="GO" id="GO:0045259">
    <property type="term" value="C:proton-transporting ATP synthase complex"/>
    <property type="evidence" value="ECO:0007669"/>
    <property type="project" value="UniProtKB-KW"/>
</dbReference>
<dbReference type="GO" id="GO:0046933">
    <property type="term" value="F:proton-transporting ATP synthase activity, rotational mechanism"/>
    <property type="evidence" value="ECO:0007669"/>
    <property type="project" value="UniProtKB-UniRule"/>
</dbReference>
<dbReference type="GO" id="GO:0046961">
    <property type="term" value="F:proton-transporting ATPase activity, rotational mechanism"/>
    <property type="evidence" value="ECO:0007669"/>
    <property type="project" value="TreeGrafter"/>
</dbReference>
<dbReference type="CDD" id="cd06503">
    <property type="entry name" value="ATP-synt_Fo_b"/>
    <property type="match status" value="1"/>
</dbReference>
<dbReference type="Gene3D" id="6.10.250.1580">
    <property type="match status" value="1"/>
</dbReference>
<dbReference type="HAMAP" id="MF_01398">
    <property type="entry name" value="ATP_synth_b_bprime"/>
    <property type="match status" value="1"/>
</dbReference>
<dbReference type="InterPro" id="IPR028987">
    <property type="entry name" value="ATP_synth_B-like_membr_sf"/>
</dbReference>
<dbReference type="InterPro" id="IPR002146">
    <property type="entry name" value="ATP_synth_b/b'su_bac/chlpt"/>
</dbReference>
<dbReference type="InterPro" id="IPR005864">
    <property type="entry name" value="ATP_synth_F0_bsu_bac"/>
</dbReference>
<dbReference type="InterPro" id="IPR050059">
    <property type="entry name" value="ATP_synthase_B_chain"/>
</dbReference>
<dbReference type="NCBIfam" id="TIGR01144">
    <property type="entry name" value="ATP_synt_b"/>
    <property type="match status" value="1"/>
</dbReference>
<dbReference type="NCBIfam" id="NF004411">
    <property type="entry name" value="PRK05759.1-2"/>
    <property type="match status" value="1"/>
</dbReference>
<dbReference type="PANTHER" id="PTHR33445:SF1">
    <property type="entry name" value="ATP SYNTHASE SUBUNIT B"/>
    <property type="match status" value="1"/>
</dbReference>
<dbReference type="PANTHER" id="PTHR33445">
    <property type="entry name" value="ATP SYNTHASE SUBUNIT B', CHLOROPLASTIC"/>
    <property type="match status" value="1"/>
</dbReference>
<dbReference type="Pfam" id="PF00430">
    <property type="entry name" value="ATP-synt_B"/>
    <property type="match status" value="1"/>
</dbReference>
<dbReference type="SUPFAM" id="SSF81573">
    <property type="entry name" value="F1F0 ATP synthase subunit B, membrane domain"/>
    <property type="match status" value="1"/>
</dbReference>
<name>ATPF_CUPTR</name>
<accession>B3R7L9</accession>
<proteinExistence type="inferred from homology"/>
<protein>
    <recommendedName>
        <fullName evidence="1">ATP synthase subunit b</fullName>
    </recommendedName>
    <alternativeName>
        <fullName evidence="1">ATP synthase F(0) sector subunit b</fullName>
    </alternativeName>
    <alternativeName>
        <fullName evidence="1">ATPase subunit I</fullName>
    </alternativeName>
    <alternativeName>
        <fullName evidence="1">F-type ATPase subunit b</fullName>
        <shortName evidence="1">F-ATPase subunit b</shortName>
    </alternativeName>
</protein>
<organism>
    <name type="scientific">Cupriavidus taiwanensis (strain DSM 17343 / BCRC 17206 / CCUG 44338 / CIP 107171 / LMG 19424 / R1)</name>
    <name type="common">Ralstonia taiwanensis (strain LMG 19424)</name>
    <dbReference type="NCBI Taxonomy" id="977880"/>
    <lineage>
        <taxon>Bacteria</taxon>
        <taxon>Pseudomonadati</taxon>
        <taxon>Pseudomonadota</taxon>
        <taxon>Betaproteobacteria</taxon>
        <taxon>Burkholderiales</taxon>
        <taxon>Burkholderiaceae</taxon>
        <taxon>Cupriavidus</taxon>
    </lineage>
</organism>
<comment type="function">
    <text evidence="1">F(1)F(0) ATP synthase produces ATP from ADP in the presence of a proton or sodium gradient. F-type ATPases consist of two structural domains, F(1) containing the extramembraneous catalytic core and F(0) containing the membrane proton channel, linked together by a central stalk and a peripheral stalk. During catalysis, ATP synthesis in the catalytic domain of F(1) is coupled via a rotary mechanism of the central stalk subunits to proton translocation.</text>
</comment>
<comment type="function">
    <text evidence="1">Component of the F(0) channel, it forms part of the peripheral stalk, linking F(1) to F(0).</text>
</comment>
<comment type="subunit">
    <text evidence="1">F-type ATPases have 2 components, F(1) - the catalytic core - and F(0) - the membrane proton channel. F(1) has five subunits: alpha(3), beta(3), gamma(1), delta(1), epsilon(1). F(0) has three main subunits: a(1), b(2) and c(10-14). The alpha and beta chains form an alternating ring which encloses part of the gamma chain. F(1) is attached to F(0) by a central stalk formed by the gamma and epsilon chains, while a peripheral stalk is formed by the delta and b chains.</text>
</comment>
<comment type="subcellular location">
    <subcellularLocation>
        <location evidence="1">Cell inner membrane</location>
        <topology evidence="1">Single-pass membrane protein</topology>
    </subcellularLocation>
</comment>
<comment type="similarity">
    <text evidence="1">Belongs to the ATPase B chain family.</text>
</comment>
<sequence length="156" mass="17229">MNLNATFFAQMVVFFILWWVVAKFIWPPLVKALDERAKKIADGLAAAEKGKAELELANKRVDQAMAEARTEGAQRVADAEKRAQLTADEIKQNAQAEAARIIAQAKAEAEQQATRAREALRDQVAVLAVKGAEQILKREVNAQVHADLLNQLKAEL</sequence>